<name>ERF1_RABIT</name>
<accession>P62497</accession>
<accession>P46055</accession>
<feature type="initiator methionine" description="Removed" evidence="1">
    <location>
        <position position="1"/>
    </location>
</feature>
<feature type="chain" id="PRO_0000143142" description="Eukaryotic peptide chain release factor subunit 1">
    <location>
        <begin position="2"/>
        <end position="437"/>
    </location>
</feature>
<feature type="short sequence motif" description="NIKS motif; plays an important role in translational termination" evidence="1">
    <location>
        <begin position="61"/>
        <end position="64"/>
    </location>
</feature>
<feature type="modified residue" description="N-acetylalanine" evidence="1">
    <location>
        <position position="2"/>
    </location>
</feature>
<feature type="modified residue" description="4-hydroxylysine" evidence="2">
    <location>
        <position position="63"/>
    </location>
</feature>
<feature type="modified residue" description="N5-methylglutamine" evidence="1">
    <location>
        <position position="185"/>
    </location>
</feature>
<feature type="modified residue" description="Phosphothreonine" evidence="1">
    <location>
        <position position="347"/>
    </location>
</feature>
<feature type="cross-link" description="Glycyl lysine isopeptide (Lys-Gly) (interchain with G-Cter in SUMO2)" evidence="1">
    <location>
        <position position="87"/>
    </location>
</feature>
<feature type="cross-link" description="Glycyl lysine isopeptide (Lys-Gly) (interchain with G-Cter in ubiquitin)" evidence="1">
    <location>
        <position position="279"/>
    </location>
</feature>
<feature type="cross-link" description="Glycyl lysine isopeptide (Lys-Gly) (interchain with G-Cter in SUMO2)" evidence="1">
    <location>
        <position position="404"/>
    </location>
</feature>
<sequence length="437" mass="49031">MADDPSAADRNVEIWKIKKLIKSLEAARGNGTSMISLIIPPKDQISRVAKMLADEFGTASNIKSRVNRLSVLGAITSVQQRLKLYNKVPPNGLVVYCGTIVTEEGKEKKVNIDFEPFKPINTSLYLCDNKFHTEALTALLSDDSKFGFIVIDGSGALFGTLQGNTREVLHKFTVDLPKKHGRGGQSALRFARLRMEKRHNYVRKVAETAVQLFISGDKVNVAGLVLAGSADFKTELSQSDMFDQRLQSKVLKLVDISYGGENGFNQAIELSTEVLSNVKFIQEKKLIGRYFDEISQDTGKYCFGVEDTLKALEMGAVEILIVYENLDIMRYVLHCQGTEEEKILYLTPEQEKDKSHFTDKETGQEHELIESMPLLEWFANNYKKFGATLEIVTDKSQEGSQFVKGFGGIGGILRYRVDFQGMEYQGGDDEFFDLDDY</sequence>
<gene>
    <name type="primary">ETF1</name>
    <name type="synonym">ERF1</name>
    <name type="synonym">RF1</name>
</gene>
<comment type="function">
    <text evidence="1">Component of the eRF1-eRF3-GTP ternary complex, a ternary complex that mediates translation termination in response to the termination codons. The eRF1-eRF3-GTP complex binds to a stop codon in the ribosomal A-site. ETF1/ERF1 is responsible for stop codon recognition and inducing hydrolysis of peptidyl-tRNA. Following GTP hydrolysis, eRF3 (GSPT1/ERF3A or GSPT2/ERF3B) dissociates, permitting ETF1/eRF1 to accommodate fully in the A-site, followed by hydrolysis of peptidyl-tRNA. Component of the transient SURF complex which recruits UPF1 to stalled ribosomes in the context of nonsense-mediated decay (NMD) of mRNAs containing premature stop codons. Required for SHFL-mediated translation termination which inhibits programmed ribosomal frameshifting (-1PRF) of mRNA from viruses and cellular genes.</text>
</comment>
<comment type="subunit">
    <text evidence="1">Component of the eRF1-eRF3-GTP ternary complex, composed of ETF1/ERF1 and eRF3 (GSPT1/ERF3A or GSPT2/ERF3B) and GTP. Component of the transient SURF (SMG1-UPF1-eRF1-eRF3) complex. Interacts with JMJD4. The ETF1-GSPT1 complex interacts with JMJD4.</text>
</comment>
<comment type="subcellular location">
    <subcellularLocation>
        <location evidence="1">Cytoplasm</location>
    </subcellularLocation>
</comment>
<comment type="PTM">
    <text evidence="4">Hydroxylation at Lys-63 by JMJD4 promotes its translational termination efficiency.</text>
</comment>
<comment type="PTM">
    <text evidence="1">Methylated at Gln-185 by N6AMT1.</text>
</comment>
<comment type="PTM">
    <text evidence="1">Ubiquitinated at Lys-279 via 'Lys-6'-linked polyubiquitin chains by RNF14 and RNF25 in response to ribosome collisions (ribosome stalling), leading to its degradation by the proteasome and rescue of stalled ribosomes.</text>
</comment>
<comment type="similarity">
    <text evidence="3">Belongs to the eukaryotic release factor 1 family.</text>
</comment>
<evidence type="ECO:0000250" key="1">
    <source>
        <dbReference type="UniProtKB" id="P62495"/>
    </source>
</evidence>
<evidence type="ECO:0000269" key="2">
    <source>
    </source>
</evidence>
<evidence type="ECO:0000305" key="3"/>
<evidence type="ECO:0000305" key="4">
    <source>
    </source>
</evidence>
<dbReference type="EMBL" id="AB029089">
    <property type="protein sequence ID" value="BAA85489.1"/>
    <property type="molecule type" value="mRNA"/>
</dbReference>
<dbReference type="RefSeq" id="NP_001076236.1">
    <property type="nucleotide sequence ID" value="NM_001082767.1"/>
</dbReference>
<dbReference type="PDB" id="3J5Y">
    <property type="method" value="EM"/>
    <property type="resolution" value="9.70 A"/>
    <property type="chains" value="6=10-420"/>
</dbReference>
<dbReference type="PDB" id="7NWH">
    <property type="method" value="EM"/>
    <property type="resolution" value="4.10 A"/>
    <property type="chains" value="ii=1-437"/>
</dbReference>
<dbReference type="PDB" id="7O80">
    <property type="method" value="EM"/>
    <property type="resolution" value="2.90 A"/>
    <property type="chains" value="By=1-437"/>
</dbReference>
<dbReference type="PDBsum" id="3J5Y"/>
<dbReference type="PDBsum" id="7NWH"/>
<dbReference type="PDBsum" id="7O80"/>
<dbReference type="BMRB" id="P62497"/>
<dbReference type="EMDB" id="EMD-12632"/>
<dbReference type="EMDB" id="EMD-12758"/>
<dbReference type="SMR" id="P62497"/>
<dbReference type="FunCoup" id="P62497">
    <property type="interactions" value="2968"/>
</dbReference>
<dbReference type="STRING" id="9986.ENSOCUP00000005745"/>
<dbReference type="PaxDb" id="9986-ENSOCUP00000005745"/>
<dbReference type="Ensembl" id="ENSOCUT00000006647.2">
    <property type="protein sequence ID" value="ENSOCUP00000005745.2"/>
    <property type="gene ID" value="ENSOCUG00000006650.2"/>
</dbReference>
<dbReference type="GeneID" id="100009553"/>
<dbReference type="KEGG" id="ocu:100009553"/>
<dbReference type="CTD" id="2107"/>
<dbReference type="eggNOG" id="KOG0688">
    <property type="taxonomic scope" value="Eukaryota"/>
</dbReference>
<dbReference type="GeneTree" id="ENSGT00390000009004"/>
<dbReference type="HOGENOM" id="CLU_035759_2_1_1"/>
<dbReference type="InParanoid" id="P62497"/>
<dbReference type="OMA" id="RCNGSEE"/>
<dbReference type="OrthoDB" id="10254527at2759"/>
<dbReference type="TreeFam" id="TF105672"/>
<dbReference type="CD-CODE" id="97EBEFF3">
    <property type="entry name" value="Nucleolus"/>
</dbReference>
<dbReference type="Proteomes" id="UP000001811">
    <property type="component" value="Chromosome 3"/>
</dbReference>
<dbReference type="Bgee" id="ENSOCUG00000006650">
    <property type="expression patterns" value="Expressed in ovary and 15 other cell types or tissues"/>
</dbReference>
<dbReference type="GO" id="GO:0005737">
    <property type="term" value="C:cytoplasm"/>
    <property type="evidence" value="ECO:0000250"/>
    <property type="project" value="UniProtKB"/>
</dbReference>
<dbReference type="GO" id="GO:0022626">
    <property type="term" value="C:cytosolic ribosome"/>
    <property type="evidence" value="ECO:0007669"/>
    <property type="project" value="Ensembl"/>
</dbReference>
<dbReference type="GO" id="GO:0018444">
    <property type="term" value="C:translation release factor complex"/>
    <property type="evidence" value="ECO:0007669"/>
    <property type="project" value="Ensembl"/>
</dbReference>
<dbReference type="GO" id="GO:0004045">
    <property type="term" value="F:peptidyl-tRNA hydrolase activity"/>
    <property type="evidence" value="ECO:0007669"/>
    <property type="project" value="Ensembl"/>
</dbReference>
<dbReference type="GO" id="GO:1990825">
    <property type="term" value="F:sequence-specific mRNA binding"/>
    <property type="evidence" value="ECO:0007669"/>
    <property type="project" value="Ensembl"/>
</dbReference>
<dbReference type="GO" id="GO:0003747">
    <property type="term" value="F:translation release factor activity"/>
    <property type="evidence" value="ECO:0007669"/>
    <property type="project" value="Ensembl"/>
</dbReference>
<dbReference type="GO" id="GO:0008079">
    <property type="term" value="F:translation termination factor activity"/>
    <property type="evidence" value="ECO:0000250"/>
    <property type="project" value="UniProtKB"/>
</dbReference>
<dbReference type="GO" id="GO:0000184">
    <property type="term" value="P:nuclear-transcribed mRNA catabolic process, nonsense-mediated decay"/>
    <property type="evidence" value="ECO:0007669"/>
    <property type="project" value="UniProtKB-KW"/>
</dbReference>
<dbReference type="GO" id="GO:0006449">
    <property type="term" value="P:regulation of translational termination"/>
    <property type="evidence" value="ECO:0000250"/>
    <property type="project" value="UniProtKB"/>
</dbReference>
<dbReference type="FunFam" id="3.30.1330.30:FF:000009">
    <property type="entry name" value="Eukaryotic peptide chain release factor subunit 1"/>
    <property type="match status" value="1"/>
</dbReference>
<dbReference type="FunFam" id="3.30.420.60:FF:000001">
    <property type="entry name" value="Eukaryotic peptide chain release factor subunit 1"/>
    <property type="match status" value="1"/>
</dbReference>
<dbReference type="FunFam" id="3.30.960.10:FF:000001">
    <property type="entry name" value="Eukaryotic peptide chain release factor subunit 1"/>
    <property type="match status" value="1"/>
</dbReference>
<dbReference type="Gene3D" id="3.30.1330.30">
    <property type="match status" value="1"/>
</dbReference>
<dbReference type="Gene3D" id="3.30.960.10">
    <property type="entry name" value="eRF1 domain 1"/>
    <property type="match status" value="1"/>
</dbReference>
<dbReference type="Gene3D" id="3.30.420.60">
    <property type="entry name" value="eRF1 domain 2"/>
    <property type="match status" value="1"/>
</dbReference>
<dbReference type="InterPro" id="IPR042226">
    <property type="entry name" value="eFR1_2_sf"/>
</dbReference>
<dbReference type="InterPro" id="IPR005140">
    <property type="entry name" value="eRF1_1_Pelota"/>
</dbReference>
<dbReference type="InterPro" id="IPR024049">
    <property type="entry name" value="eRF1_1_sf"/>
</dbReference>
<dbReference type="InterPro" id="IPR005141">
    <property type="entry name" value="eRF1_2"/>
</dbReference>
<dbReference type="InterPro" id="IPR005142">
    <property type="entry name" value="eRF1_3"/>
</dbReference>
<dbReference type="InterPro" id="IPR004403">
    <property type="entry name" value="Peptide_chain-rel_eRF1/aRF1"/>
</dbReference>
<dbReference type="InterPro" id="IPR029064">
    <property type="entry name" value="Ribosomal_eL30-like_sf"/>
</dbReference>
<dbReference type="NCBIfam" id="TIGR03676">
    <property type="entry name" value="aRF1_eRF1"/>
    <property type="match status" value="1"/>
</dbReference>
<dbReference type="PANTHER" id="PTHR10113">
    <property type="entry name" value="PEPTIDE CHAIN RELEASE FACTOR SUBUNIT 1"/>
    <property type="match status" value="1"/>
</dbReference>
<dbReference type="Pfam" id="PF03463">
    <property type="entry name" value="eRF1_1"/>
    <property type="match status" value="1"/>
</dbReference>
<dbReference type="Pfam" id="PF03464">
    <property type="entry name" value="eRF1_2"/>
    <property type="match status" value="1"/>
</dbReference>
<dbReference type="Pfam" id="PF03465">
    <property type="entry name" value="eRF1_3"/>
    <property type="match status" value="1"/>
</dbReference>
<dbReference type="SMART" id="SM01194">
    <property type="entry name" value="eRF1_1"/>
    <property type="match status" value="1"/>
</dbReference>
<dbReference type="SUPFAM" id="SSF55315">
    <property type="entry name" value="L30e-like"/>
    <property type="match status" value="1"/>
</dbReference>
<dbReference type="SUPFAM" id="SSF55481">
    <property type="entry name" value="N-terminal domain of eukaryotic peptide chain release factor subunit 1, ERF1"/>
    <property type="match status" value="1"/>
</dbReference>
<dbReference type="SUPFAM" id="SSF53137">
    <property type="entry name" value="Translational machinery components"/>
    <property type="match status" value="1"/>
</dbReference>
<proteinExistence type="evidence at protein level"/>
<reference key="1">
    <citation type="journal article" date="1999" name="Biochemistry (Mosc.)">
        <title>Overexpression and purification of recombinant eRF1 proteins of rabbit and Tetrahymena thermophila.</title>
        <authorList>
            <person name="Karamyshev A.L."/>
            <person name="Karamysheva Z.N."/>
            <person name="Ito K."/>
            <person name="Matsufuji S."/>
            <person name="Nakamura Y."/>
        </authorList>
    </citation>
    <scope>NUCLEOTIDE SEQUENCE [MRNA]</scope>
</reference>
<reference key="2">
    <citation type="journal article" date="2014" name="Mol. Cell">
        <title>Optimal translational termination requires C4 lysyl hydroxylation of eRF1.</title>
        <authorList>
            <person name="Feng T."/>
            <person name="Yamamoto A."/>
            <person name="Wilkins S.E."/>
            <person name="Sokolova E."/>
            <person name="Yates L.A."/>
            <person name="Muenzel M."/>
            <person name="Singh P."/>
            <person name="Hopkinson R.J."/>
            <person name="Fischer R."/>
            <person name="Cockman M.E."/>
            <person name="Shelley J."/>
            <person name="Trudgian D.C."/>
            <person name="Schoedel J."/>
            <person name="McCullagh J.S."/>
            <person name="Ge W."/>
            <person name="Kessler B.M."/>
            <person name="Gilbert R.J."/>
            <person name="Frolova L.Y."/>
            <person name="Alkalaeva E."/>
            <person name="Ratcliffe P.J."/>
            <person name="Schofield C.J."/>
            <person name="Coleman M.L."/>
        </authorList>
    </citation>
    <scope>HYDROXYLATION AT LYS-63</scope>
</reference>
<reference key="3">
    <citation type="journal article" date="2012" name="Proc. Natl. Acad. Sci. U.S.A.">
        <title>Cryo-EM structure of the mammalian eukaryotic release factor eRF1-eRF3-associated termination complex.</title>
        <authorList>
            <person name="Taylor D."/>
            <person name="Unbehaun A."/>
            <person name="Li W."/>
            <person name="Das S."/>
            <person name="Lei J."/>
            <person name="Liao H.Y."/>
            <person name="Grassucci R.A."/>
            <person name="Pestova T.V."/>
            <person name="Frank J."/>
        </authorList>
    </citation>
    <scope>STRUCTURE BY ELECTRON MICROSCOPY (9.7 ANGSTROMS) IN COMPLEX WITH RIBOSOME</scope>
</reference>
<protein>
    <recommendedName>
        <fullName>Eukaryotic peptide chain release factor subunit 1</fullName>
        <shortName>Eukaryotic release factor 1</shortName>
        <shortName>eRF1</shortName>
    </recommendedName>
</protein>
<keyword id="KW-0002">3D-structure</keyword>
<keyword id="KW-0007">Acetylation</keyword>
<keyword id="KW-0963">Cytoplasm</keyword>
<keyword id="KW-0379">Hydroxylation</keyword>
<keyword id="KW-1017">Isopeptide bond</keyword>
<keyword id="KW-0488">Methylation</keyword>
<keyword id="KW-0866">Nonsense-mediated mRNA decay</keyword>
<keyword id="KW-0597">Phosphoprotein</keyword>
<keyword id="KW-0648">Protein biosynthesis</keyword>
<keyword id="KW-1185">Reference proteome</keyword>
<keyword id="KW-0832">Ubl conjugation</keyword>
<organism>
    <name type="scientific">Oryctolagus cuniculus</name>
    <name type="common">Rabbit</name>
    <dbReference type="NCBI Taxonomy" id="9986"/>
    <lineage>
        <taxon>Eukaryota</taxon>
        <taxon>Metazoa</taxon>
        <taxon>Chordata</taxon>
        <taxon>Craniata</taxon>
        <taxon>Vertebrata</taxon>
        <taxon>Euteleostomi</taxon>
        <taxon>Mammalia</taxon>
        <taxon>Eutheria</taxon>
        <taxon>Euarchontoglires</taxon>
        <taxon>Glires</taxon>
        <taxon>Lagomorpha</taxon>
        <taxon>Leporidae</taxon>
        <taxon>Oryctolagus</taxon>
    </lineage>
</organism>